<name>TATA_SHEWM</name>
<reference key="1">
    <citation type="submission" date="2008-02" db="EMBL/GenBank/DDBJ databases">
        <title>Complete sequence of Shewanella woodyi ATCC 51908.</title>
        <authorList>
            <consortium name="US DOE Joint Genome Institute"/>
            <person name="Copeland A."/>
            <person name="Lucas S."/>
            <person name="Lapidus A."/>
            <person name="Glavina del Rio T."/>
            <person name="Dalin E."/>
            <person name="Tice H."/>
            <person name="Bruce D."/>
            <person name="Goodwin L."/>
            <person name="Pitluck S."/>
            <person name="Sims D."/>
            <person name="Brettin T."/>
            <person name="Detter J.C."/>
            <person name="Han C."/>
            <person name="Kuske C.R."/>
            <person name="Schmutz J."/>
            <person name="Larimer F."/>
            <person name="Land M."/>
            <person name="Hauser L."/>
            <person name="Kyrpides N."/>
            <person name="Lykidis A."/>
            <person name="Zhao J.-S."/>
            <person name="Richardson P."/>
        </authorList>
    </citation>
    <scope>NUCLEOTIDE SEQUENCE [LARGE SCALE GENOMIC DNA]</scope>
    <source>
        <strain>ATCC 51908 / MS32</strain>
    </source>
</reference>
<feature type="chain" id="PRO_1000197907" description="Sec-independent protein translocase protein TatA">
    <location>
        <begin position="1"/>
        <end position="83"/>
    </location>
</feature>
<feature type="transmembrane region" description="Helical" evidence="1">
    <location>
        <begin position="1"/>
        <end position="21"/>
    </location>
</feature>
<feature type="region of interest" description="Disordered" evidence="2">
    <location>
        <begin position="47"/>
        <end position="83"/>
    </location>
</feature>
<feature type="compositionally biased region" description="Basic and acidic residues" evidence="2">
    <location>
        <begin position="47"/>
        <end position="57"/>
    </location>
</feature>
<feature type="compositionally biased region" description="Basic and acidic residues" evidence="2">
    <location>
        <begin position="71"/>
        <end position="83"/>
    </location>
</feature>
<gene>
    <name evidence="1" type="primary">tatA</name>
    <name type="ordered locus">Swoo_0524</name>
</gene>
<sequence length="83" mass="8934">MGNMGIWQLLIIAVIVILLFGTKKLRSLGGDLGGAVKGFKNAMSSEEEKKALEETASEKATPSVEKTAPNAEKKTETKDKEQV</sequence>
<keyword id="KW-0997">Cell inner membrane</keyword>
<keyword id="KW-1003">Cell membrane</keyword>
<keyword id="KW-0472">Membrane</keyword>
<keyword id="KW-0653">Protein transport</keyword>
<keyword id="KW-1185">Reference proteome</keyword>
<keyword id="KW-0811">Translocation</keyword>
<keyword id="KW-0812">Transmembrane</keyword>
<keyword id="KW-1133">Transmembrane helix</keyword>
<keyword id="KW-0813">Transport</keyword>
<protein>
    <recommendedName>
        <fullName evidence="1">Sec-independent protein translocase protein TatA</fullName>
    </recommendedName>
</protein>
<comment type="function">
    <text evidence="1">Part of the twin-arginine translocation (Tat) system that transports large folded proteins containing a characteristic twin-arginine motif in their signal peptide across membranes. TatA could form the protein-conducting channel of the Tat system.</text>
</comment>
<comment type="subunit">
    <text evidence="1">The Tat system comprises two distinct complexes: a TatABC complex, containing multiple copies of TatA, TatB and TatC subunits, and a separate TatA complex, containing only TatA subunits. Substrates initially bind to the TatABC complex, which probably triggers association of the separate TatA complex to form the active translocon.</text>
</comment>
<comment type="subcellular location">
    <subcellularLocation>
        <location evidence="1">Cell inner membrane</location>
        <topology evidence="1">Single-pass membrane protein</topology>
    </subcellularLocation>
</comment>
<comment type="similarity">
    <text evidence="1">Belongs to the TatA/E family.</text>
</comment>
<accession>B1KR04</accession>
<evidence type="ECO:0000255" key="1">
    <source>
        <dbReference type="HAMAP-Rule" id="MF_00236"/>
    </source>
</evidence>
<evidence type="ECO:0000256" key="2">
    <source>
        <dbReference type="SAM" id="MobiDB-lite"/>
    </source>
</evidence>
<dbReference type="EMBL" id="CP000961">
    <property type="protein sequence ID" value="ACA84821.1"/>
    <property type="molecule type" value="Genomic_DNA"/>
</dbReference>
<dbReference type="RefSeq" id="WP_012323169.1">
    <property type="nucleotide sequence ID" value="NC_010506.1"/>
</dbReference>
<dbReference type="SMR" id="B1KR04"/>
<dbReference type="STRING" id="392500.Swoo_0524"/>
<dbReference type="KEGG" id="swd:Swoo_0524"/>
<dbReference type="eggNOG" id="COG1826">
    <property type="taxonomic scope" value="Bacteria"/>
</dbReference>
<dbReference type="HOGENOM" id="CLU_086034_5_1_6"/>
<dbReference type="Proteomes" id="UP000002168">
    <property type="component" value="Chromosome"/>
</dbReference>
<dbReference type="GO" id="GO:0033281">
    <property type="term" value="C:TAT protein transport complex"/>
    <property type="evidence" value="ECO:0007669"/>
    <property type="project" value="UniProtKB-UniRule"/>
</dbReference>
<dbReference type="GO" id="GO:0008320">
    <property type="term" value="F:protein transmembrane transporter activity"/>
    <property type="evidence" value="ECO:0007669"/>
    <property type="project" value="UniProtKB-UniRule"/>
</dbReference>
<dbReference type="GO" id="GO:0043953">
    <property type="term" value="P:protein transport by the Tat complex"/>
    <property type="evidence" value="ECO:0007669"/>
    <property type="project" value="UniProtKB-UniRule"/>
</dbReference>
<dbReference type="Gene3D" id="1.20.5.3310">
    <property type="match status" value="1"/>
</dbReference>
<dbReference type="HAMAP" id="MF_00236">
    <property type="entry name" value="TatA_E"/>
    <property type="match status" value="1"/>
</dbReference>
<dbReference type="InterPro" id="IPR003369">
    <property type="entry name" value="TatA/B/E"/>
</dbReference>
<dbReference type="InterPro" id="IPR006312">
    <property type="entry name" value="TatA/E"/>
</dbReference>
<dbReference type="NCBIfam" id="TIGR01411">
    <property type="entry name" value="tatAE"/>
    <property type="match status" value="1"/>
</dbReference>
<dbReference type="PANTHER" id="PTHR42982">
    <property type="entry name" value="SEC-INDEPENDENT PROTEIN TRANSLOCASE PROTEIN TATA"/>
    <property type="match status" value="1"/>
</dbReference>
<dbReference type="PANTHER" id="PTHR42982:SF1">
    <property type="entry name" value="SEC-INDEPENDENT PROTEIN TRANSLOCASE PROTEIN TATA"/>
    <property type="match status" value="1"/>
</dbReference>
<dbReference type="Pfam" id="PF02416">
    <property type="entry name" value="TatA_B_E"/>
    <property type="match status" value="1"/>
</dbReference>
<organism>
    <name type="scientific">Shewanella woodyi (strain ATCC 51908 / MS32)</name>
    <dbReference type="NCBI Taxonomy" id="392500"/>
    <lineage>
        <taxon>Bacteria</taxon>
        <taxon>Pseudomonadati</taxon>
        <taxon>Pseudomonadota</taxon>
        <taxon>Gammaproteobacteria</taxon>
        <taxon>Alteromonadales</taxon>
        <taxon>Shewanellaceae</taxon>
        <taxon>Shewanella</taxon>
    </lineage>
</organism>
<proteinExistence type="inferred from homology"/>